<dbReference type="EMBL" id="CR378663">
    <property type="protein sequence ID" value="CAG18690.1"/>
    <property type="molecule type" value="Genomic_DNA"/>
</dbReference>
<dbReference type="RefSeq" id="WP_011217066.1">
    <property type="nucleotide sequence ID" value="NC_006370.1"/>
</dbReference>
<dbReference type="SMR" id="Q6LVI5"/>
<dbReference type="STRING" id="298386.PBPRA0251"/>
<dbReference type="KEGG" id="ppr:PBPRA0251"/>
<dbReference type="eggNOG" id="COG0684">
    <property type="taxonomic scope" value="Bacteria"/>
</dbReference>
<dbReference type="HOGENOM" id="CLU_072626_4_0_6"/>
<dbReference type="Proteomes" id="UP000000593">
    <property type="component" value="Chromosome 1"/>
</dbReference>
<dbReference type="GO" id="GO:0005737">
    <property type="term" value="C:cytoplasm"/>
    <property type="evidence" value="ECO:0007669"/>
    <property type="project" value="UniProtKB-SubCell"/>
</dbReference>
<dbReference type="GO" id="GO:0060698">
    <property type="term" value="F:endoribonuclease inhibitor activity"/>
    <property type="evidence" value="ECO:0007669"/>
    <property type="project" value="UniProtKB-UniRule"/>
</dbReference>
<dbReference type="GO" id="GO:0019899">
    <property type="term" value="F:enzyme binding"/>
    <property type="evidence" value="ECO:0007669"/>
    <property type="project" value="UniProtKB-UniRule"/>
</dbReference>
<dbReference type="GO" id="GO:0051252">
    <property type="term" value="P:regulation of RNA metabolic process"/>
    <property type="evidence" value="ECO:0007669"/>
    <property type="project" value="InterPro"/>
</dbReference>
<dbReference type="CDD" id="cd16841">
    <property type="entry name" value="RraA_family"/>
    <property type="match status" value="1"/>
</dbReference>
<dbReference type="Gene3D" id="3.50.30.40">
    <property type="entry name" value="Ribonuclease E inhibitor RraA/RraA-like"/>
    <property type="match status" value="1"/>
</dbReference>
<dbReference type="HAMAP" id="MF_00471">
    <property type="entry name" value="RraA"/>
    <property type="match status" value="1"/>
</dbReference>
<dbReference type="InterPro" id="IPR010203">
    <property type="entry name" value="RraA"/>
</dbReference>
<dbReference type="InterPro" id="IPR005493">
    <property type="entry name" value="RraA/RraA-like"/>
</dbReference>
<dbReference type="InterPro" id="IPR036704">
    <property type="entry name" value="RraA/RraA-like_sf"/>
</dbReference>
<dbReference type="InterPro" id="IPR014339">
    <property type="entry name" value="RraA_gpbac"/>
</dbReference>
<dbReference type="NCBIfam" id="TIGR01935">
    <property type="entry name" value="NOT-MenG"/>
    <property type="match status" value="1"/>
</dbReference>
<dbReference type="NCBIfam" id="NF006875">
    <property type="entry name" value="PRK09372.1"/>
    <property type="match status" value="1"/>
</dbReference>
<dbReference type="NCBIfam" id="TIGR02998">
    <property type="entry name" value="RraA_entero"/>
    <property type="match status" value="1"/>
</dbReference>
<dbReference type="PANTHER" id="PTHR33254">
    <property type="entry name" value="4-HYDROXY-4-METHYL-2-OXOGLUTARATE ALDOLASE 3-RELATED"/>
    <property type="match status" value="1"/>
</dbReference>
<dbReference type="PANTHER" id="PTHR33254:SF29">
    <property type="entry name" value="REGULATOR OF RIBONUCLEASE ACTIVITY A"/>
    <property type="match status" value="1"/>
</dbReference>
<dbReference type="Pfam" id="PF03737">
    <property type="entry name" value="RraA-like"/>
    <property type="match status" value="1"/>
</dbReference>
<dbReference type="SUPFAM" id="SSF89562">
    <property type="entry name" value="RraA-like"/>
    <property type="match status" value="1"/>
</dbReference>
<gene>
    <name evidence="1" type="primary">rraA</name>
    <name type="ordered locus">PBPRA0251</name>
</gene>
<sequence>MEYNTSELCDIYLDQVDVIEPMFNSYGGRSSFGGQITTVKCFEDNALLRTVLQQPGVGRVLLVDGGGSLRRALIDADIALLATENEWEGLIVYGSVRNVDDLDELEIGIQAIASIPVGADQQGVGDVDIAVNFGGVTFLPEDHIYADNTGVILSPEPLDIE</sequence>
<protein>
    <recommendedName>
        <fullName evidence="1">Regulator of ribonuclease activity A</fullName>
    </recommendedName>
</protein>
<proteinExistence type="inferred from homology"/>
<name>RRAA_PHOPR</name>
<comment type="function">
    <text evidence="1">Globally modulates RNA abundance by binding to RNase E (Rne) and regulating its endonucleolytic activity. Can modulate Rne action in a substrate-dependent manner by altering the composition of the degradosome. Modulates RNA-binding and helicase activities of the degradosome.</text>
</comment>
<comment type="subunit">
    <text evidence="1">Homotrimer. Binds to both RNA-binding sites in the C-terminal region of Rne and to RhlB.</text>
</comment>
<comment type="subcellular location">
    <subcellularLocation>
        <location evidence="1">Cytoplasm</location>
    </subcellularLocation>
</comment>
<comment type="similarity">
    <text evidence="1">Belongs to the RraA family.</text>
</comment>
<accession>Q6LVI5</accession>
<evidence type="ECO:0000255" key="1">
    <source>
        <dbReference type="HAMAP-Rule" id="MF_00471"/>
    </source>
</evidence>
<feature type="chain" id="PRO_0000209627" description="Regulator of ribonuclease activity A">
    <location>
        <begin position="1"/>
        <end position="161"/>
    </location>
</feature>
<reference key="1">
    <citation type="journal article" date="2005" name="Science">
        <title>Life at depth: Photobacterium profundum genome sequence and expression analysis.</title>
        <authorList>
            <person name="Vezzi A."/>
            <person name="Campanaro S."/>
            <person name="D'Angelo M."/>
            <person name="Simonato F."/>
            <person name="Vitulo N."/>
            <person name="Lauro F.M."/>
            <person name="Cestaro A."/>
            <person name="Malacrida G."/>
            <person name="Simionati B."/>
            <person name="Cannata N."/>
            <person name="Romualdi C."/>
            <person name="Bartlett D.H."/>
            <person name="Valle G."/>
        </authorList>
    </citation>
    <scope>NUCLEOTIDE SEQUENCE [LARGE SCALE GENOMIC DNA]</scope>
    <source>
        <strain>ATCC BAA-1253 / SS9</strain>
    </source>
</reference>
<keyword id="KW-0963">Cytoplasm</keyword>
<keyword id="KW-1185">Reference proteome</keyword>
<organism>
    <name type="scientific">Photobacterium profundum (strain SS9)</name>
    <dbReference type="NCBI Taxonomy" id="298386"/>
    <lineage>
        <taxon>Bacteria</taxon>
        <taxon>Pseudomonadati</taxon>
        <taxon>Pseudomonadota</taxon>
        <taxon>Gammaproteobacteria</taxon>
        <taxon>Vibrionales</taxon>
        <taxon>Vibrionaceae</taxon>
        <taxon>Photobacterium</taxon>
    </lineage>
</organism>